<feature type="chain" id="PRO_0000423380" description="Mitotic checkpoint protein BUB3.1">
    <location>
        <begin position="1"/>
        <end position="340"/>
    </location>
</feature>
<feature type="repeat" description="WD 1">
    <location>
        <begin position="15"/>
        <end position="54"/>
    </location>
</feature>
<feature type="repeat" description="WD 2">
    <location>
        <begin position="96"/>
        <end position="135"/>
    </location>
</feature>
<feature type="repeat" description="WD 3">
    <location>
        <begin position="142"/>
        <end position="179"/>
    </location>
</feature>
<feature type="repeat" description="WD 4">
    <location>
        <begin position="239"/>
        <end position="278"/>
    </location>
</feature>
<feature type="repeat" description="WD 5">
    <location>
        <begin position="281"/>
        <end position="324"/>
    </location>
</feature>
<feature type="region of interest" description="Disordered" evidence="2">
    <location>
        <begin position="1"/>
        <end position="20"/>
    </location>
</feature>
<evidence type="ECO:0000250" key="1"/>
<evidence type="ECO:0000256" key="2">
    <source>
        <dbReference type="SAM" id="MobiDB-lite"/>
    </source>
</evidence>
<evidence type="ECO:0000269" key="3">
    <source>
    </source>
</evidence>
<evidence type="ECO:0000269" key="4">
    <source>
    </source>
</evidence>
<evidence type="ECO:0000269" key="5">
    <source>
    </source>
</evidence>
<evidence type="ECO:0000305" key="6"/>
<accession>Q9LJN8</accession>
<dbReference type="EMBL" id="AP000417">
    <property type="protein sequence ID" value="BAB02543.1"/>
    <property type="molecule type" value="Genomic_DNA"/>
</dbReference>
<dbReference type="EMBL" id="CP002686">
    <property type="protein sequence ID" value="AEE76263.1"/>
    <property type="molecule type" value="Genomic_DNA"/>
</dbReference>
<dbReference type="EMBL" id="BT004273">
    <property type="protein sequence ID" value="AAO42274.1"/>
    <property type="molecule type" value="mRNA"/>
</dbReference>
<dbReference type="EMBL" id="BT006152">
    <property type="protein sequence ID" value="AAP04137.1"/>
    <property type="molecule type" value="mRNA"/>
</dbReference>
<dbReference type="EMBL" id="AY087404">
    <property type="protein sequence ID" value="AAM64953.1"/>
    <property type="molecule type" value="mRNA"/>
</dbReference>
<dbReference type="PIR" id="T52386">
    <property type="entry name" value="T52386"/>
</dbReference>
<dbReference type="RefSeq" id="NP_566644.1">
    <property type="nucleotide sequence ID" value="NM_112849.5"/>
</dbReference>
<dbReference type="SMR" id="Q9LJN8"/>
<dbReference type="BioGRID" id="6829">
    <property type="interactions" value="17"/>
</dbReference>
<dbReference type="FunCoup" id="Q9LJN8">
    <property type="interactions" value="3999"/>
</dbReference>
<dbReference type="IntAct" id="Q9LJN8">
    <property type="interactions" value="13"/>
</dbReference>
<dbReference type="STRING" id="3702.Q9LJN8"/>
<dbReference type="iPTMnet" id="Q9LJN8"/>
<dbReference type="PaxDb" id="3702-AT3G19590.1"/>
<dbReference type="ProteomicsDB" id="240297"/>
<dbReference type="EnsemblPlants" id="AT3G19590.1">
    <property type="protein sequence ID" value="AT3G19590.1"/>
    <property type="gene ID" value="AT3G19590"/>
</dbReference>
<dbReference type="GeneID" id="821496"/>
<dbReference type="Gramene" id="AT3G19590.1">
    <property type="protein sequence ID" value="AT3G19590.1"/>
    <property type="gene ID" value="AT3G19590"/>
</dbReference>
<dbReference type="KEGG" id="ath:AT3G19590"/>
<dbReference type="Araport" id="AT3G19590"/>
<dbReference type="TAIR" id="AT3G19590">
    <property type="gene designation" value="BUB3.1"/>
</dbReference>
<dbReference type="eggNOG" id="KOG1036">
    <property type="taxonomic scope" value="Eukaryota"/>
</dbReference>
<dbReference type="HOGENOM" id="CLU_038526_0_0_1"/>
<dbReference type="InParanoid" id="Q9LJN8"/>
<dbReference type="OMA" id="WDSTLHI"/>
<dbReference type="OrthoDB" id="10262475at2759"/>
<dbReference type="PhylomeDB" id="Q9LJN8"/>
<dbReference type="CD-CODE" id="4299E36E">
    <property type="entry name" value="Nucleolus"/>
</dbReference>
<dbReference type="PRO" id="PR:Q9LJN8"/>
<dbReference type="Proteomes" id="UP000006548">
    <property type="component" value="Chromosome 3"/>
</dbReference>
<dbReference type="ExpressionAtlas" id="Q9LJN8">
    <property type="expression patterns" value="baseline and differential"/>
</dbReference>
<dbReference type="GO" id="GO:0080008">
    <property type="term" value="C:Cul4-RING E3 ubiquitin ligase complex"/>
    <property type="evidence" value="ECO:0000250"/>
    <property type="project" value="TAIR"/>
</dbReference>
<dbReference type="GO" id="GO:0000776">
    <property type="term" value="C:kinetochore"/>
    <property type="evidence" value="ECO:0000314"/>
    <property type="project" value="TAIR"/>
</dbReference>
<dbReference type="GO" id="GO:0005828">
    <property type="term" value="C:kinetochore microtubule"/>
    <property type="evidence" value="ECO:0000314"/>
    <property type="project" value="UniProtKB"/>
</dbReference>
<dbReference type="GO" id="GO:0005634">
    <property type="term" value="C:nucleus"/>
    <property type="evidence" value="ECO:0007669"/>
    <property type="project" value="UniProtKB-SubCell"/>
</dbReference>
<dbReference type="GO" id="GO:0009524">
    <property type="term" value="C:phragmoplast"/>
    <property type="evidence" value="ECO:0000314"/>
    <property type="project" value="TAIR"/>
</dbReference>
<dbReference type="GO" id="GO:0005876">
    <property type="term" value="C:spindle microtubule"/>
    <property type="evidence" value="ECO:0000314"/>
    <property type="project" value="UniProtKB"/>
</dbReference>
<dbReference type="GO" id="GO:0051301">
    <property type="term" value="P:cell division"/>
    <property type="evidence" value="ECO:0007669"/>
    <property type="project" value="UniProtKB-KW"/>
</dbReference>
<dbReference type="GO" id="GO:0007059">
    <property type="term" value="P:chromosome segregation"/>
    <property type="evidence" value="ECO:0007669"/>
    <property type="project" value="UniProtKB-KW"/>
</dbReference>
<dbReference type="GO" id="GO:0051321">
    <property type="term" value="P:meiotic cell cycle"/>
    <property type="evidence" value="ECO:0007669"/>
    <property type="project" value="UniProtKB-KW"/>
</dbReference>
<dbReference type="GO" id="GO:0007094">
    <property type="term" value="P:mitotic spindle assembly checkpoint signaling"/>
    <property type="evidence" value="ECO:0000314"/>
    <property type="project" value="TAIR"/>
</dbReference>
<dbReference type="FunFam" id="2.130.10.10:FF:000047">
    <property type="entry name" value="Mitotic checkpoint protein bub3, putative"/>
    <property type="match status" value="1"/>
</dbReference>
<dbReference type="Gene3D" id="2.130.10.10">
    <property type="entry name" value="YVTN repeat-like/Quinoprotein amine dehydrogenase"/>
    <property type="match status" value="1"/>
</dbReference>
<dbReference type="InterPro" id="IPR020472">
    <property type="entry name" value="G-protein_beta_WD-40_rep"/>
</dbReference>
<dbReference type="InterPro" id="IPR015943">
    <property type="entry name" value="WD40/YVTN_repeat-like_dom_sf"/>
</dbReference>
<dbReference type="InterPro" id="IPR036322">
    <property type="entry name" value="WD40_repeat_dom_sf"/>
</dbReference>
<dbReference type="InterPro" id="IPR001680">
    <property type="entry name" value="WD40_rpt"/>
</dbReference>
<dbReference type="PANTHER" id="PTHR10971">
    <property type="entry name" value="MRNA EXPORT FACTOR AND BUB3"/>
    <property type="match status" value="1"/>
</dbReference>
<dbReference type="Pfam" id="PF00400">
    <property type="entry name" value="WD40"/>
    <property type="match status" value="3"/>
</dbReference>
<dbReference type="PRINTS" id="PR00320">
    <property type="entry name" value="GPROTEINBRPT"/>
</dbReference>
<dbReference type="SMART" id="SM00320">
    <property type="entry name" value="WD40"/>
    <property type="match status" value="5"/>
</dbReference>
<dbReference type="SUPFAM" id="SSF50978">
    <property type="entry name" value="WD40 repeat-like"/>
    <property type="match status" value="1"/>
</dbReference>
<dbReference type="PROSITE" id="PS50082">
    <property type="entry name" value="WD_REPEATS_2"/>
    <property type="match status" value="2"/>
</dbReference>
<dbReference type="PROSITE" id="PS50294">
    <property type="entry name" value="WD_REPEATS_REGION"/>
    <property type="match status" value="1"/>
</dbReference>
<protein>
    <recommendedName>
        <fullName>Mitotic checkpoint protein BUB3.1</fullName>
    </recommendedName>
    <alternativeName>
        <fullName>Protein BUDDING UNINHIBITED BY BENZYMIDAZOL 3.1</fullName>
    </alternativeName>
</protein>
<proteinExistence type="evidence at protein level"/>
<reference key="1">
    <citation type="journal article" date="2000" name="DNA Res.">
        <title>Structural analysis of Arabidopsis thaliana chromosome 3. II. Sequence features of the 4,251,695 bp regions covered by 90 P1, TAC and BAC clones.</title>
        <authorList>
            <person name="Kaneko T."/>
            <person name="Katoh T."/>
            <person name="Sato S."/>
            <person name="Nakamura Y."/>
            <person name="Asamizu E."/>
            <person name="Tabata S."/>
        </authorList>
    </citation>
    <scope>NUCLEOTIDE SEQUENCE [LARGE SCALE GENOMIC DNA]</scope>
    <source>
        <strain>cv. Columbia</strain>
    </source>
</reference>
<reference key="2">
    <citation type="journal article" date="2017" name="Plant J.">
        <title>Araport11: a complete reannotation of the Arabidopsis thaliana reference genome.</title>
        <authorList>
            <person name="Cheng C.Y."/>
            <person name="Krishnakumar V."/>
            <person name="Chan A.P."/>
            <person name="Thibaud-Nissen F."/>
            <person name="Schobel S."/>
            <person name="Town C.D."/>
        </authorList>
    </citation>
    <scope>GENOME REANNOTATION</scope>
    <source>
        <strain>cv. Columbia</strain>
    </source>
</reference>
<reference key="3">
    <citation type="journal article" date="2003" name="Science">
        <title>Empirical analysis of transcriptional activity in the Arabidopsis genome.</title>
        <authorList>
            <person name="Yamada K."/>
            <person name="Lim J."/>
            <person name="Dale J.M."/>
            <person name="Chen H."/>
            <person name="Shinn P."/>
            <person name="Palm C.J."/>
            <person name="Southwick A.M."/>
            <person name="Wu H.C."/>
            <person name="Kim C.J."/>
            <person name="Nguyen M."/>
            <person name="Pham P.K."/>
            <person name="Cheuk R.F."/>
            <person name="Karlin-Newmann G."/>
            <person name="Liu S.X."/>
            <person name="Lam B."/>
            <person name="Sakano H."/>
            <person name="Wu T."/>
            <person name="Yu G."/>
            <person name="Miranda M."/>
            <person name="Quach H.L."/>
            <person name="Tripp M."/>
            <person name="Chang C.H."/>
            <person name="Lee J.M."/>
            <person name="Toriumi M.J."/>
            <person name="Chan M.M."/>
            <person name="Tang C.C."/>
            <person name="Onodera C.S."/>
            <person name="Deng J.M."/>
            <person name="Akiyama K."/>
            <person name="Ansari Y."/>
            <person name="Arakawa T."/>
            <person name="Banh J."/>
            <person name="Banno F."/>
            <person name="Bowser L."/>
            <person name="Brooks S.Y."/>
            <person name="Carninci P."/>
            <person name="Chao Q."/>
            <person name="Choy N."/>
            <person name="Enju A."/>
            <person name="Goldsmith A.D."/>
            <person name="Gurjal M."/>
            <person name="Hansen N.F."/>
            <person name="Hayashizaki Y."/>
            <person name="Johnson-Hopson C."/>
            <person name="Hsuan V.W."/>
            <person name="Iida K."/>
            <person name="Karnes M."/>
            <person name="Khan S."/>
            <person name="Koesema E."/>
            <person name="Ishida J."/>
            <person name="Jiang P.X."/>
            <person name="Jones T."/>
            <person name="Kawai J."/>
            <person name="Kamiya A."/>
            <person name="Meyers C."/>
            <person name="Nakajima M."/>
            <person name="Narusaka M."/>
            <person name="Seki M."/>
            <person name="Sakurai T."/>
            <person name="Satou M."/>
            <person name="Tamse R."/>
            <person name="Vaysberg M."/>
            <person name="Wallender E.K."/>
            <person name="Wong C."/>
            <person name="Yamamura Y."/>
            <person name="Yuan S."/>
            <person name="Shinozaki K."/>
            <person name="Davis R.W."/>
            <person name="Theologis A."/>
            <person name="Ecker J.R."/>
        </authorList>
    </citation>
    <scope>NUCLEOTIDE SEQUENCE [LARGE SCALE MRNA]</scope>
    <source>
        <strain>cv. Columbia</strain>
    </source>
</reference>
<reference key="4">
    <citation type="submission" date="2002-03" db="EMBL/GenBank/DDBJ databases">
        <title>Full-length cDNA from Arabidopsis thaliana.</title>
        <authorList>
            <person name="Brover V.V."/>
            <person name="Troukhan M.E."/>
            <person name="Alexandrov N.A."/>
            <person name="Lu Y.-P."/>
            <person name="Flavell R.B."/>
            <person name="Feldmann K.A."/>
        </authorList>
    </citation>
    <scope>NUCLEOTIDE SEQUENCE [LARGE SCALE MRNA]</scope>
</reference>
<reference key="5">
    <citation type="journal article" date="2008" name="Front. Biosci.">
        <title>The Arabidopsis checkpoint protein Bub3.1 is essential for gametophyte development.</title>
        <authorList>
            <person name="Lermontova I."/>
            <person name="Fuchs J."/>
            <person name="Schubert I."/>
        </authorList>
    </citation>
    <scope>FUNCTION</scope>
    <scope>DISRUPTION PHENOTYPE</scope>
    <scope>TISSUE SPECIFICITY</scope>
    <scope>INDUCTION</scope>
    <scope>SUBCELLULAR LOCATION</scope>
    <source>
        <strain>cv. Columbia</strain>
    </source>
</reference>
<reference key="6">
    <citation type="journal article" date="2009" name="PLoS ONE">
        <title>Spindle assembly checkpoint protein dynamics reveal conserved and unsuspected roles in plant cell division.</title>
        <authorList>
            <person name="Caillaud M.-C."/>
            <person name="Paganelli L."/>
            <person name="Lecomte P."/>
            <person name="Deslandes L."/>
            <person name="Quentin M."/>
            <person name="Pecrix Y."/>
            <person name="Le Bris M."/>
            <person name="Marfaing N."/>
            <person name="Abad P."/>
            <person name="Favery B."/>
        </authorList>
    </citation>
    <scope>FUNCTION</scope>
    <scope>INTERACTION WITH MAD2 AND BUBR1</scope>
    <scope>SUBCELLULAR LOCATION</scope>
    <scope>TISSUE SPECIFICITY</scope>
    <scope>INDUCTION</scope>
</reference>
<reference key="7">
    <citation type="journal article" date="2011" name="PLoS ONE">
        <title>Conserved CDC20 cell cycle functions are carried out by two of the five isoforms in Arabidopsis thaliana.</title>
        <authorList>
            <person name="Kevei Z."/>
            <person name="Baloban M."/>
            <person name="Da Ines O."/>
            <person name="Tiricz H."/>
            <person name="Kroll A."/>
            <person name="Regulski K."/>
            <person name="Mergaert P."/>
            <person name="Kondorosi E."/>
        </authorList>
    </citation>
    <scope>INTERACTION WITH CDC20-1 AND CDC20-2</scope>
</reference>
<keyword id="KW-0131">Cell cycle</keyword>
<keyword id="KW-0132">Cell division</keyword>
<keyword id="KW-0137">Centromere</keyword>
<keyword id="KW-0158">Chromosome</keyword>
<keyword id="KW-0159">Chromosome partition</keyword>
<keyword id="KW-0963">Cytoplasm</keyword>
<keyword id="KW-0206">Cytoskeleton</keyword>
<keyword id="KW-0995">Kinetochore</keyword>
<keyword id="KW-0469">Meiosis</keyword>
<keyword id="KW-0498">Mitosis</keyword>
<keyword id="KW-0539">Nucleus</keyword>
<keyword id="KW-1185">Reference proteome</keyword>
<keyword id="KW-0677">Repeat</keyword>
<keyword id="KW-0853">WD repeat</keyword>
<gene>
    <name type="primary">BUB3.1</name>
    <name type="ordered locus">At3g19590</name>
    <name type="ORF">MMB12.5</name>
</gene>
<organism>
    <name type="scientific">Arabidopsis thaliana</name>
    <name type="common">Mouse-ear cress</name>
    <dbReference type="NCBI Taxonomy" id="3702"/>
    <lineage>
        <taxon>Eukaryota</taxon>
        <taxon>Viridiplantae</taxon>
        <taxon>Streptophyta</taxon>
        <taxon>Embryophyta</taxon>
        <taxon>Tracheophyta</taxon>
        <taxon>Spermatophyta</taxon>
        <taxon>Magnoliopsida</taxon>
        <taxon>eudicotyledons</taxon>
        <taxon>Gunneridae</taxon>
        <taxon>Pentapetalae</taxon>
        <taxon>rosids</taxon>
        <taxon>malvids</taxon>
        <taxon>Brassicales</taxon>
        <taxon>Brassicaceae</taxon>
        <taxon>Camelineae</taxon>
        <taxon>Arabidopsis</taxon>
    </lineage>
</organism>
<sequence length="340" mass="37874">MTTVTPSAGRELSNPPSDGISNLRFSNNSDHLLVSSWDKRVRLYDVSTNSLKGEFLHGGAVLDCCFHDDFSGFSVGADYKVRRIVFNVGKEDILGTHDKAVRCVEYSYAAGQVITGSWDKTVKCWDPRGASGPERTQVGTYLQPERVYSMSLVGHRLVVATAGRHVNIYDLRNMSQPEQRRESSLKYQTRCVRCYPNGTGYALSSVEGRVAMEFFDLSEAAQAKKYAFKCHRKSEAGRDIVYPVNSIAFHPIYGTFATGGCDGFVNIWDGNNKKRLYQYSKYPTSISALSFSRDGQLLAVASSYTFEEGEKSQEPEAIFVRSVNEIEVKPKPKVYPNPAA</sequence>
<name>BUB31_ARATH</name>
<comment type="function">
    <text evidence="1 3 4">Has a dual function in spindle-assembly checkpoint signaling and in promoting the establishment of correct kinetochore-microtubule (K-MT) attachments. Promotes the formation of stable end-on bipolar attachments. Necessary for kinetochore localization of BUB1. The BUB1/BUB3 complex plays a role in the inhibition of anaphase-promoting complex or cyclosome (APC/C) when spindle-assembly checkpoint is activated and inhibits the ubiquitin ligase activity of APC/C by phosphorylating its activator CDC20 (By similarity). Essential for gametophyte development.</text>
</comment>
<comment type="subunit">
    <text evidence="4 5">Part of the mitotic checkpoint complex (MCC); interacts with CDC20-1 and CDC20-2. Interacts with MAD2 and BUBR1.</text>
</comment>
<comment type="subcellular location">
    <subcellularLocation>
        <location>Nucleus</location>
    </subcellularLocation>
    <subcellularLocation>
        <location>Chromosome</location>
        <location>Centromere</location>
        <location>Kinetochore</location>
    </subcellularLocation>
    <subcellularLocation>
        <location>Cytoplasm</location>
        <location>Cytoskeleton</location>
        <location>Phragmoplast</location>
    </subcellularLocation>
    <subcellularLocation>
        <location>Cytoplasm</location>
        <location>Cytoskeleton</location>
        <location>Spindle</location>
    </subcellularLocation>
    <text>Accumulates onto both kinetochores and the spindle microtubules in cell arrested in metaphase. Starts to localize at kinetochores in prometaphase I (Pro-MI) stage and maintains the localization until the metaphase I-anaphase I (MI-AI) transition. Associates with unattached kinetochores upon spindle assembly checkpoint (SAC) activation. Present in the phragmoplast midline during the final step of cell division.</text>
</comment>
<comment type="tissue specificity">
    <text evidence="3 4">Expressed in actively dividing tissues, early in organ development, in young leaves, lateral root primordia and root meristems, flower buds, flowers and siliques.</text>
</comment>
<comment type="induction">
    <text evidence="3 4">Cell cycle regulated expression with a distinct expression peak at the G2/M boundary.</text>
</comment>
<comment type="disruption phenotype">
    <text evidence="3">Survives only in heterozygous state. Displays defects in development of male and female gametophytes.</text>
</comment>
<comment type="similarity">
    <text evidence="6">Belongs to the WD repeat BUB3 family.</text>
</comment>